<name>SRPX2_HUMAN</name>
<dbReference type="EMBL" id="AF060567">
    <property type="protein sequence ID" value="AAC15765.1"/>
    <property type="molecule type" value="mRNA"/>
</dbReference>
<dbReference type="EMBL" id="AF393649">
    <property type="protein sequence ID" value="AAM73693.1"/>
    <property type="molecule type" value="mRNA"/>
</dbReference>
<dbReference type="EMBL" id="AK075462">
    <property type="protein sequence ID" value="BAG52145.1"/>
    <property type="molecule type" value="mRNA"/>
</dbReference>
<dbReference type="EMBL" id="AL035608">
    <property type="status" value="NOT_ANNOTATED_CDS"/>
    <property type="molecule type" value="Genomic_DNA"/>
</dbReference>
<dbReference type="EMBL" id="AL390040">
    <property type="status" value="NOT_ANNOTATED_CDS"/>
    <property type="molecule type" value="Genomic_DNA"/>
</dbReference>
<dbReference type="EMBL" id="BC020733">
    <property type="protein sequence ID" value="AAH20733.1"/>
    <property type="molecule type" value="mRNA"/>
</dbReference>
<dbReference type="CCDS" id="CCDS14471.1"/>
<dbReference type="RefSeq" id="NP_055282.1">
    <property type="nucleotide sequence ID" value="NM_014467.3"/>
</dbReference>
<dbReference type="BioGRID" id="118110">
    <property type="interactions" value="1"/>
</dbReference>
<dbReference type="FunCoup" id="O60687">
    <property type="interactions" value="15"/>
</dbReference>
<dbReference type="IntAct" id="O60687">
    <property type="interactions" value="2"/>
</dbReference>
<dbReference type="STRING" id="9606.ENSP00000362095"/>
<dbReference type="GlyGen" id="O60687">
    <property type="glycosylation" value="3 sites, 1 O-linked glycan (2 sites)"/>
</dbReference>
<dbReference type="iPTMnet" id="O60687"/>
<dbReference type="PhosphoSitePlus" id="O60687"/>
<dbReference type="BioMuta" id="SRPX2"/>
<dbReference type="jPOST" id="O60687"/>
<dbReference type="MassIVE" id="O60687"/>
<dbReference type="PaxDb" id="9606-ENSP00000362095"/>
<dbReference type="PeptideAtlas" id="O60687"/>
<dbReference type="ProteomicsDB" id="49528"/>
<dbReference type="Antibodypedia" id="28519">
    <property type="antibodies" value="176 antibodies from 31 providers"/>
</dbReference>
<dbReference type="DNASU" id="27286"/>
<dbReference type="Ensembl" id="ENST00000373004.5">
    <property type="protein sequence ID" value="ENSP00000362095.3"/>
    <property type="gene ID" value="ENSG00000102359.9"/>
</dbReference>
<dbReference type="GeneID" id="27286"/>
<dbReference type="KEGG" id="hsa:27286"/>
<dbReference type="MANE-Select" id="ENST00000373004.5">
    <property type="protein sequence ID" value="ENSP00000362095.3"/>
    <property type="RefSeq nucleotide sequence ID" value="NM_014467.3"/>
    <property type="RefSeq protein sequence ID" value="NP_055282.1"/>
</dbReference>
<dbReference type="UCSC" id="uc004egb.4">
    <property type="organism name" value="human"/>
</dbReference>
<dbReference type="AGR" id="HGNC:30668"/>
<dbReference type="CTD" id="27286"/>
<dbReference type="DisGeNET" id="27286"/>
<dbReference type="GeneCards" id="SRPX2"/>
<dbReference type="HGNC" id="HGNC:30668">
    <property type="gene designation" value="SRPX2"/>
</dbReference>
<dbReference type="HPA" id="ENSG00000102359">
    <property type="expression patterns" value="Tissue enhanced (adipose)"/>
</dbReference>
<dbReference type="MalaCards" id="SRPX2"/>
<dbReference type="MIM" id="300642">
    <property type="type" value="gene"/>
</dbReference>
<dbReference type="MIM" id="300643">
    <property type="type" value="phenotype"/>
</dbReference>
<dbReference type="neXtProt" id="NX_O60687"/>
<dbReference type="OpenTargets" id="ENSG00000102359"/>
<dbReference type="Orphanet" id="98889">
    <property type="disease" value="Bilateral perisylvian polymicrogyria"/>
</dbReference>
<dbReference type="Orphanet" id="163721">
    <property type="disease" value="Rolandic epilepsy-speech dyspraxia syndrome"/>
</dbReference>
<dbReference type="Orphanet" id="1945">
    <property type="disease" value="Self-limited epilepsy with centrotemporal spikes"/>
</dbReference>
<dbReference type="PharmGKB" id="PA134983994"/>
<dbReference type="VEuPathDB" id="HostDB:ENSG00000102359"/>
<dbReference type="eggNOG" id="ENOG502QREP">
    <property type="taxonomic scope" value="Eukaryota"/>
</dbReference>
<dbReference type="GeneTree" id="ENSGT00940000159149"/>
<dbReference type="HOGENOM" id="CLU_047011_0_0_1"/>
<dbReference type="InParanoid" id="O60687"/>
<dbReference type="OMA" id="EQRDMCE"/>
<dbReference type="OrthoDB" id="6136178at2759"/>
<dbReference type="PAN-GO" id="O60687">
    <property type="GO annotations" value="4 GO annotations based on evolutionary models"/>
</dbReference>
<dbReference type="PhylomeDB" id="O60687"/>
<dbReference type="TreeFam" id="TF336515"/>
<dbReference type="PathwayCommons" id="O60687"/>
<dbReference type="SignaLink" id="O60687"/>
<dbReference type="BioGRID-ORCS" id="27286">
    <property type="hits" value="14 hits in 766 CRISPR screens"/>
</dbReference>
<dbReference type="GeneWiki" id="SRPX2"/>
<dbReference type="GenomeRNAi" id="27286"/>
<dbReference type="Pharos" id="O60687">
    <property type="development level" value="Tbio"/>
</dbReference>
<dbReference type="PRO" id="PR:O60687"/>
<dbReference type="Proteomes" id="UP000005640">
    <property type="component" value="Chromosome X"/>
</dbReference>
<dbReference type="RNAct" id="O60687">
    <property type="molecule type" value="protein"/>
</dbReference>
<dbReference type="Bgee" id="ENSG00000102359">
    <property type="expression patterns" value="Expressed in stromal cell of endometrium and 139 other cell types or tissues"/>
</dbReference>
<dbReference type="ExpressionAtlas" id="O60687">
    <property type="expression patterns" value="baseline and differential"/>
</dbReference>
<dbReference type="GO" id="GO:0009986">
    <property type="term" value="C:cell surface"/>
    <property type="evidence" value="ECO:0000250"/>
    <property type="project" value="UniProtKB"/>
</dbReference>
<dbReference type="GO" id="GO:0062023">
    <property type="term" value="C:collagen-containing extracellular matrix"/>
    <property type="evidence" value="ECO:0007005"/>
    <property type="project" value="BHF-UCL"/>
</dbReference>
<dbReference type="GO" id="GO:0005737">
    <property type="term" value="C:cytoplasm"/>
    <property type="evidence" value="ECO:0000314"/>
    <property type="project" value="UniProtKB"/>
</dbReference>
<dbReference type="GO" id="GO:0060076">
    <property type="term" value="C:excitatory synapse"/>
    <property type="evidence" value="ECO:0000250"/>
    <property type="project" value="UniProtKB"/>
</dbReference>
<dbReference type="GO" id="GO:0005615">
    <property type="term" value="C:extracellular space"/>
    <property type="evidence" value="ECO:0000314"/>
    <property type="project" value="UniProtKB"/>
</dbReference>
<dbReference type="GO" id="GO:0098978">
    <property type="term" value="C:glutamatergic synapse"/>
    <property type="evidence" value="ECO:0007669"/>
    <property type="project" value="Ensembl"/>
</dbReference>
<dbReference type="GO" id="GO:0097060">
    <property type="term" value="C:synaptic membrane"/>
    <property type="evidence" value="ECO:0000250"/>
    <property type="project" value="UniProtKB"/>
</dbReference>
<dbReference type="GO" id="GO:0036458">
    <property type="term" value="F:hepatocyte growth factor binding"/>
    <property type="evidence" value="ECO:0000314"/>
    <property type="project" value="UniProtKB"/>
</dbReference>
<dbReference type="GO" id="GO:0042802">
    <property type="term" value="F:identical protein binding"/>
    <property type="evidence" value="ECO:0000314"/>
    <property type="project" value="UniProtKB"/>
</dbReference>
<dbReference type="GO" id="GO:0005102">
    <property type="term" value="F:signaling receptor binding"/>
    <property type="evidence" value="ECO:0000353"/>
    <property type="project" value="UniProtKB"/>
</dbReference>
<dbReference type="GO" id="GO:0001525">
    <property type="term" value="P:angiogenesis"/>
    <property type="evidence" value="ECO:0007669"/>
    <property type="project" value="UniProtKB-KW"/>
</dbReference>
<dbReference type="GO" id="GO:0048870">
    <property type="term" value="P:cell motility"/>
    <property type="evidence" value="ECO:0000314"/>
    <property type="project" value="UniProtKB"/>
</dbReference>
<dbReference type="GO" id="GO:0098609">
    <property type="term" value="P:cell-cell adhesion"/>
    <property type="evidence" value="ECO:0000314"/>
    <property type="project" value="UniProtKB"/>
</dbReference>
<dbReference type="GO" id="GO:0090050">
    <property type="term" value="P:positive regulation of cell migration involved in sprouting angiogenesis"/>
    <property type="evidence" value="ECO:0000250"/>
    <property type="project" value="UniProtKB"/>
</dbReference>
<dbReference type="GO" id="GO:0051965">
    <property type="term" value="P:positive regulation of synapse assembly"/>
    <property type="evidence" value="ECO:0000314"/>
    <property type="project" value="UniProtKB"/>
</dbReference>
<dbReference type="GO" id="GO:0042325">
    <property type="term" value="P:regulation of phosphorylation"/>
    <property type="evidence" value="ECO:0000314"/>
    <property type="project" value="UniProtKB"/>
</dbReference>
<dbReference type="GO" id="GO:0071625">
    <property type="term" value="P:vocalization behavior"/>
    <property type="evidence" value="ECO:0007669"/>
    <property type="project" value="Ensembl"/>
</dbReference>
<dbReference type="CDD" id="cd00033">
    <property type="entry name" value="CCP"/>
    <property type="match status" value="3"/>
</dbReference>
<dbReference type="FunFam" id="2.10.70.10:FF:000024">
    <property type="entry name" value="Sushi repeat-containing protein SRPX"/>
    <property type="match status" value="1"/>
</dbReference>
<dbReference type="FunFam" id="2.10.70.10:FF:000073">
    <property type="entry name" value="Sushi repeat-containing protein SRPX2"/>
    <property type="match status" value="1"/>
</dbReference>
<dbReference type="FunFam" id="2.10.70.10:FF:000058">
    <property type="entry name" value="sushi repeat-containing protein SRPX2"/>
    <property type="match status" value="1"/>
</dbReference>
<dbReference type="Gene3D" id="2.10.70.10">
    <property type="entry name" value="Complement Module, domain 1"/>
    <property type="match status" value="3"/>
</dbReference>
<dbReference type="InterPro" id="IPR025232">
    <property type="entry name" value="DUF4174"/>
</dbReference>
<dbReference type="InterPro" id="IPR003410">
    <property type="entry name" value="HYR_dom"/>
</dbReference>
<dbReference type="InterPro" id="IPR043555">
    <property type="entry name" value="SRPX-like"/>
</dbReference>
<dbReference type="InterPro" id="IPR035976">
    <property type="entry name" value="Sushi/SCR/CCP_sf"/>
</dbReference>
<dbReference type="InterPro" id="IPR000436">
    <property type="entry name" value="Sushi_SCR_CCP_dom"/>
</dbReference>
<dbReference type="PANTHER" id="PTHR46343">
    <property type="entry name" value="HYR DOMAIN-CONTAINING PROTEIN"/>
    <property type="match status" value="1"/>
</dbReference>
<dbReference type="PANTHER" id="PTHR46343:SF3">
    <property type="entry name" value="SUSHI REPEAT-CONTAINING PROTEIN SRPX2"/>
    <property type="match status" value="1"/>
</dbReference>
<dbReference type="Pfam" id="PF13778">
    <property type="entry name" value="DUF4174"/>
    <property type="match status" value="1"/>
</dbReference>
<dbReference type="Pfam" id="PF02494">
    <property type="entry name" value="HYR"/>
    <property type="match status" value="1"/>
</dbReference>
<dbReference type="Pfam" id="PF00084">
    <property type="entry name" value="Sushi"/>
    <property type="match status" value="3"/>
</dbReference>
<dbReference type="SMART" id="SM00032">
    <property type="entry name" value="CCP"/>
    <property type="match status" value="3"/>
</dbReference>
<dbReference type="SUPFAM" id="SSF57535">
    <property type="entry name" value="Complement control module/SCR domain"/>
    <property type="match status" value="3"/>
</dbReference>
<dbReference type="PROSITE" id="PS50825">
    <property type="entry name" value="HYR"/>
    <property type="match status" value="1"/>
</dbReference>
<dbReference type="PROSITE" id="PS50923">
    <property type="entry name" value="SUSHI"/>
    <property type="match status" value="3"/>
</dbReference>
<feature type="signal peptide" evidence="2">
    <location>
        <begin position="1"/>
        <end position="23"/>
    </location>
</feature>
<feature type="chain" id="PRO_0000274525" description="Sushi repeat-containing protein SRPX2">
    <location>
        <begin position="24"/>
        <end position="465"/>
    </location>
</feature>
<feature type="domain" description="Sushi 1" evidence="4">
    <location>
        <begin position="69"/>
        <end position="119"/>
    </location>
</feature>
<feature type="domain" description="Sushi 2" evidence="4">
    <location>
        <begin position="120"/>
        <end position="178"/>
    </location>
</feature>
<feature type="domain" description="HYR" evidence="3">
    <location>
        <begin position="177"/>
        <end position="261"/>
    </location>
</feature>
<feature type="domain" description="Sushi 3" evidence="4">
    <location>
        <begin position="262"/>
        <end position="321"/>
    </location>
</feature>
<feature type="disulfide bond" evidence="4">
    <location>
        <begin position="71"/>
        <end position="105"/>
    </location>
</feature>
<feature type="disulfide bond" evidence="4">
    <location>
        <begin position="91"/>
        <end position="117"/>
    </location>
</feature>
<feature type="disulfide bond" evidence="4">
    <location>
        <begin position="122"/>
        <end position="163"/>
    </location>
</feature>
<feature type="disulfide bond" evidence="4">
    <location>
        <begin position="149"/>
        <end position="176"/>
    </location>
</feature>
<feature type="disulfide bond" evidence="4">
    <location>
        <begin position="264"/>
        <end position="306"/>
    </location>
</feature>
<feature type="disulfide bond" evidence="4">
    <location>
        <begin position="292"/>
        <end position="319"/>
    </location>
</feature>
<feature type="sequence variant" id="VAR_030312" description="In RESDX; uncertain significance; affects intracellular processing; increases the interaction with PLAUR; dbSNP:rs121918364." evidence="6">
    <original>Y</original>
    <variation>S</variation>
    <location>
        <position position="72"/>
    </location>
</feature>
<feature type="sequence variant" id="VAR_030313" description="In dbSNP:rs17851822." evidence="5">
    <original>T</original>
    <variation>S</variation>
    <location>
        <position position="287"/>
    </location>
</feature>
<feature type="sequence variant" id="VAR_030314" description="In RESDX; uncertain significance; results in a gain of glycosylation; affects intracellular processing; does not affect interaction with PLAUR; dbSNP:rs121918363." evidence="6">
    <original>N</original>
    <variation>S</variation>
    <location>
        <position position="327"/>
    </location>
</feature>
<protein>
    <recommendedName>
        <fullName>Sushi repeat-containing protein SRPX2</fullName>
    </recommendedName>
    <alternativeName>
        <fullName>Sushi-repeat protein upregulated in leukemia</fullName>
    </alternativeName>
</protein>
<proteinExistence type="evidence at protein level"/>
<reference key="1">
    <citation type="journal article" date="1999" name="Blood">
        <title>Two candidate downstream target genes for E2A-HLF.</title>
        <authorList>
            <person name="Kurosawa H."/>
            <person name="Goi K."/>
            <person name="Inukai T."/>
            <person name="Inaba T."/>
            <person name="Chang K.S."/>
            <person name="Shinjyo T."/>
            <person name="Rakestraw K.M."/>
            <person name="Naeve C.W."/>
            <person name="Look A.T."/>
        </authorList>
    </citation>
    <scope>NUCLEOTIDE SEQUENCE [MRNA]</scope>
    <scope>SUBCELLULAR LOCATION</scope>
    <scope>TISSUE SPECIFICITY</scope>
    <source>
        <tissue>Leukemia</tissue>
    </source>
</reference>
<reference key="2">
    <citation type="submission" date="2001-06" db="EMBL/GenBank/DDBJ databases">
        <title>Cloning and characterization of the sushi-repeat containing protein (SRP) as a novel interaction partner of Rh type C glycoprotein (RhCG).</title>
        <authorList>
            <person name="Huang C.-H."/>
            <person name="Chen H."/>
            <person name="Peng J."/>
            <person name="Chen Y."/>
        </authorList>
    </citation>
    <scope>NUCLEOTIDE SEQUENCE [MRNA]</scope>
</reference>
<reference key="3">
    <citation type="journal article" date="2005" name="DNA Res.">
        <title>Signal sequence and keyword trap in silico for selection of full-length human cDNAs encoding secretion or membrane proteins from oligo-capped cDNA libraries.</title>
        <authorList>
            <person name="Otsuki T."/>
            <person name="Ota T."/>
            <person name="Nishikawa T."/>
            <person name="Hayashi K."/>
            <person name="Suzuki Y."/>
            <person name="Yamamoto J."/>
            <person name="Wakamatsu A."/>
            <person name="Kimura K."/>
            <person name="Sakamoto K."/>
            <person name="Hatano N."/>
            <person name="Kawai Y."/>
            <person name="Ishii S."/>
            <person name="Saito K."/>
            <person name="Kojima S."/>
            <person name="Sugiyama T."/>
            <person name="Ono T."/>
            <person name="Okano K."/>
            <person name="Yoshikawa Y."/>
            <person name="Aotsuka S."/>
            <person name="Sasaki N."/>
            <person name="Hattori A."/>
            <person name="Okumura K."/>
            <person name="Nagai K."/>
            <person name="Sugano S."/>
            <person name="Isogai T."/>
        </authorList>
    </citation>
    <scope>NUCLEOTIDE SEQUENCE [LARGE SCALE MRNA]</scope>
    <source>
        <tissue>Placenta</tissue>
    </source>
</reference>
<reference key="4">
    <citation type="journal article" date="2005" name="Nature">
        <title>The DNA sequence of the human X chromosome.</title>
        <authorList>
            <person name="Ross M.T."/>
            <person name="Grafham D.V."/>
            <person name="Coffey A.J."/>
            <person name="Scherer S."/>
            <person name="McLay K."/>
            <person name="Muzny D."/>
            <person name="Platzer M."/>
            <person name="Howell G.R."/>
            <person name="Burrows C."/>
            <person name="Bird C.P."/>
            <person name="Frankish A."/>
            <person name="Lovell F.L."/>
            <person name="Howe K.L."/>
            <person name="Ashurst J.L."/>
            <person name="Fulton R.S."/>
            <person name="Sudbrak R."/>
            <person name="Wen G."/>
            <person name="Jones M.C."/>
            <person name="Hurles M.E."/>
            <person name="Andrews T.D."/>
            <person name="Scott C.E."/>
            <person name="Searle S."/>
            <person name="Ramser J."/>
            <person name="Whittaker A."/>
            <person name="Deadman R."/>
            <person name="Carter N.P."/>
            <person name="Hunt S.E."/>
            <person name="Chen R."/>
            <person name="Cree A."/>
            <person name="Gunaratne P."/>
            <person name="Havlak P."/>
            <person name="Hodgson A."/>
            <person name="Metzker M.L."/>
            <person name="Richards S."/>
            <person name="Scott G."/>
            <person name="Steffen D."/>
            <person name="Sodergren E."/>
            <person name="Wheeler D.A."/>
            <person name="Worley K.C."/>
            <person name="Ainscough R."/>
            <person name="Ambrose K.D."/>
            <person name="Ansari-Lari M.A."/>
            <person name="Aradhya S."/>
            <person name="Ashwell R.I."/>
            <person name="Babbage A.K."/>
            <person name="Bagguley C.L."/>
            <person name="Ballabio A."/>
            <person name="Banerjee R."/>
            <person name="Barker G.E."/>
            <person name="Barlow K.F."/>
            <person name="Barrett I.P."/>
            <person name="Bates K.N."/>
            <person name="Beare D.M."/>
            <person name="Beasley H."/>
            <person name="Beasley O."/>
            <person name="Beck A."/>
            <person name="Bethel G."/>
            <person name="Blechschmidt K."/>
            <person name="Brady N."/>
            <person name="Bray-Allen S."/>
            <person name="Bridgeman A.M."/>
            <person name="Brown A.J."/>
            <person name="Brown M.J."/>
            <person name="Bonnin D."/>
            <person name="Bruford E.A."/>
            <person name="Buhay C."/>
            <person name="Burch P."/>
            <person name="Burford D."/>
            <person name="Burgess J."/>
            <person name="Burrill W."/>
            <person name="Burton J."/>
            <person name="Bye J.M."/>
            <person name="Carder C."/>
            <person name="Carrel L."/>
            <person name="Chako J."/>
            <person name="Chapman J.C."/>
            <person name="Chavez D."/>
            <person name="Chen E."/>
            <person name="Chen G."/>
            <person name="Chen Y."/>
            <person name="Chen Z."/>
            <person name="Chinault C."/>
            <person name="Ciccodicola A."/>
            <person name="Clark S.Y."/>
            <person name="Clarke G."/>
            <person name="Clee C.M."/>
            <person name="Clegg S."/>
            <person name="Clerc-Blankenburg K."/>
            <person name="Clifford K."/>
            <person name="Cobley V."/>
            <person name="Cole C.G."/>
            <person name="Conquer J.S."/>
            <person name="Corby N."/>
            <person name="Connor R.E."/>
            <person name="David R."/>
            <person name="Davies J."/>
            <person name="Davis C."/>
            <person name="Davis J."/>
            <person name="Delgado O."/>
            <person name="Deshazo D."/>
            <person name="Dhami P."/>
            <person name="Ding Y."/>
            <person name="Dinh H."/>
            <person name="Dodsworth S."/>
            <person name="Draper H."/>
            <person name="Dugan-Rocha S."/>
            <person name="Dunham A."/>
            <person name="Dunn M."/>
            <person name="Durbin K.J."/>
            <person name="Dutta I."/>
            <person name="Eades T."/>
            <person name="Ellwood M."/>
            <person name="Emery-Cohen A."/>
            <person name="Errington H."/>
            <person name="Evans K.L."/>
            <person name="Faulkner L."/>
            <person name="Francis F."/>
            <person name="Frankland J."/>
            <person name="Fraser A.E."/>
            <person name="Galgoczy P."/>
            <person name="Gilbert J."/>
            <person name="Gill R."/>
            <person name="Gloeckner G."/>
            <person name="Gregory S.G."/>
            <person name="Gribble S."/>
            <person name="Griffiths C."/>
            <person name="Grocock R."/>
            <person name="Gu Y."/>
            <person name="Gwilliam R."/>
            <person name="Hamilton C."/>
            <person name="Hart E.A."/>
            <person name="Hawes A."/>
            <person name="Heath P.D."/>
            <person name="Heitmann K."/>
            <person name="Hennig S."/>
            <person name="Hernandez J."/>
            <person name="Hinzmann B."/>
            <person name="Ho S."/>
            <person name="Hoffs M."/>
            <person name="Howden P.J."/>
            <person name="Huckle E.J."/>
            <person name="Hume J."/>
            <person name="Hunt P.J."/>
            <person name="Hunt A.R."/>
            <person name="Isherwood J."/>
            <person name="Jacob L."/>
            <person name="Johnson D."/>
            <person name="Jones S."/>
            <person name="de Jong P.J."/>
            <person name="Joseph S.S."/>
            <person name="Keenan S."/>
            <person name="Kelly S."/>
            <person name="Kershaw J.K."/>
            <person name="Khan Z."/>
            <person name="Kioschis P."/>
            <person name="Klages S."/>
            <person name="Knights A.J."/>
            <person name="Kosiura A."/>
            <person name="Kovar-Smith C."/>
            <person name="Laird G.K."/>
            <person name="Langford C."/>
            <person name="Lawlor S."/>
            <person name="Leversha M."/>
            <person name="Lewis L."/>
            <person name="Liu W."/>
            <person name="Lloyd C."/>
            <person name="Lloyd D.M."/>
            <person name="Loulseged H."/>
            <person name="Loveland J.E."/>
            <person name="Lovell J.D."/>
            <person name="Lozado R."/>
            <person name="Lu J."/>
            <person name="Lyne R."/>
            <person name="Ma J."/>
            <person name="Maheshwari M."/>
            <person name="Matthews L.H."/>
            <person name="McDowall J."/>
            <person name="McLaren S."/>
            <person name="McMurray A."/>
            <person name="Meidl P."/>
            <person name="Meitinger T."/>
            <person name="Milne S."/>
            <person name="Miner G."/>
            <person name="Mistry S.L."/>
            <person name="Morgan M."/>
            <person name="Morris S."/>
            <person name="Mueller I."/>
            <person name="Mullikin J.C."/>
            <person name="Nguyen N."/>
            <person name="Nordsiek G."/>
            <person name="Nyakatura G."/>
            <person name="O'dell C.N."/>
            <person name="Okwuonu G."/>
            <person name="Palmer S."/>
            <person name="Pandian R."/>
            <person name="Parker D."/>
            <person name="Parrish J."/>
            <person name="Pasternak S."/>
            <person name="Patel D."/>
            <person name="Pearce A.V."/>
            <person name="Pearson D.M."/>
            <person name="Pelan S.E."/>
            <person name="Perez L."/>
            <person name="Porter K.M."/>
            <person name="Ramsey Y."/>
            <person name="Reichwald K."/>
            <person name="Rhodes S."/>
            <person name="Ridler K.A."/>
            <person name="Schlessinger D."/>
            <person name="Schueler M.G."/>
            <person name="Sehra H.K."/>
            <person name="Shaw-Smith C."/>
            <person name="Shen H."/>
            <person name="Sheridan E.M."/>
            <person name="Shownkeen R."/>
            <person name="Skuce C.D."/>
            <person name="Smith M.L."/>
            <person name="Sotheran E.C."/>
            <person name="Steingruber H.E."/>
            <person name="Steward C.A."/>
            <person name="Storey R."/>
            <person name="Swann R.M."/>
            <person name="Swarbreck D."/>
            <person name="Tabor P.E."/>
            <person name="Taudien S."/>
            <person name="Taylor T."/>
            <person name="Teague B."/>
            <person name="Thomas K."/>
            <person name="Thorpe A."/>
            <person name="Timms K."/>
            <person name="Tracey A."/>
            <person name="Trevanion S."/>
            <person name="Tromans A.C."/>
            <person name="d'Urso M."/>
            <person name="Verduzco D."/>
            <person name="Villasana D."/>
            <person name="Waldron L."/>
            <person name="Wall M."/>
            <person name="Wang Q."/>
            <person name="Warren J."/>
            <person name="Warry G.L."/>
            <person name="Wei X."/>
            <person name="West A."/>
            <person name="Whitehead S.L."/>
            <person name="Whiteley M.N."/>
            <person name="Wilkinson J.E."/>
            <person name="Willey D.L."/>
            <person name="Williams G."/>
            <person name="Williams L."/>
            <person name="Williamson A."/>
            <person name="Williamson H."/>
            <person name="Wilming L."/>
            <person name="Woodmansey R.L."/>
            <person name="Wray P.W."/>
            <person name="Yen J."/>
            <person name="Zhang J."/>
            <person name="Zhou J."/>
            <person name="Zoghbi H."/>
            <person name="Zorilla S."/>
            <person name="Buck D."/>
            <person name="Reinhardt R."/>
            <person name="Poustka A."/>
            <person name="Rosenthal A."/>
            <person name="Lehrach H."/>
            <person name="Meindl A."/>
            <person name="Minx P.J."/>
            <person name="Hillier L.W."/>
            <person name="Willard H.F."/>
            <person name="Wilson R.K."/>
            <person name="Waterston R.H."/>
            <person name="Rice C.M."/>
            <person name="Vaudin M."/>
            <person name="Coulson A."/>
            <person name="Nelson D.L."/>
            <person name="Weinstock G."/>
            <person name="Sulston J.E."/>
            <person name="Durbin R.M."/>
            <person name="Hubbard T."/>
            <person name="Gibbs R.A."/>
            <person name="Beck S."/>
            <person name="Rogers J."/>
            <person name="Bentley D.R."/>
        </authorList>
    </citation>
    <scope>NUCLEOTIDE SEQUENCE [LARGE SCALE GENOMIC DNA]</scope>
</reference>
<reference key="5">
    <citation type="journal article" date="2004" name="Genome Res.">
        <title>The status, quality, and expansion of the NIH full-length cDNA project: the Mammalian Gene Collection (MGC).</title>
        <authorList>
            <consortium name="The MGC Project Team"/>
        </authorList>
    </citation>
    <scope>NUCLEOTIDE SEQUENCE [LARGE SCALE MRNA]</scope>
    <scope>VARIANT SER-287</scope>
    <source>
        <tissue>Placenta</tissue>
    </source>
</reference>
<reference key="6">
    <citation type="journal article" date="2006" name="Hum. Mol. Genet.">
        <title>SRPX2 mutations in disorders of language cortex and cognition.</title>
        <authorList>
            <person name="Roll P."/>
            <person name="Rudolf G."/>
            <person name="Pereira S."/>
            <person name="Royer B."/>
            <person name="Scheffer I.E."/>
            <person name="Massacrier A."/>
            <person name="Valenti M.-P."/>
            <person name="Roeckel-Trevisiol N."/>
            <person name="Jamali S."/>
            <person name="Beclin C."/>
            <person name="Seegmuller C."/>
            <person name="Metz-Lutz M.-N."/>
            <person name="Lemainque A."/>
            <person name="Delepine M."/>
            <person name="Caloustian C."/>
            <person name="de Saint Martin A."/>
            <person name="Bruneau N."/>
            <person name="Depetris D."/>
            <person name="Mattei M.-G."/>
            <person name="Flori E."/>
            <person name="Robaglia-Schlupp A."/>
            <person name="Levy N."/>
            <person name="Neubauer B.A."/>
            <person name="Ravid R."/>
            <person name="Marescaux C."/>
            <person name="Berkovic S.F."/>
            <person name="Hirsch E."/>
            <person name="Lathrop M."/>
            <person name="Cau P."/>
            <person name="Szepetowski P."/>
        </authorList>
    </citation>
    <scope>FUNCTION</scope>
    <scope>SUBCELLULAR LOCATION</scope>
    <scope>TISSUE SPECIFICITY</scope>
    <scope>VARIANTS RESDX SER-72 AND SER-327</scope>
    <scope>CHARACTERIZATION OF VARIANTS RESDX SER-72 AND SER-327</scope>
</reference>
<reference key="7">
    <citation type="journal article" date="2008" name="Hum. Mol. Genet.">
        <title>Epileptic and developmental disorders of the speech cortex: ligand/receptor interaction of wild-type and mutant SRPX2 with the plasminogen activator receptor uPAR.</title>
        <authorList>
            <person name="Royer-Zemmour B."/>
            <person name="Ponsole-Lenfant M."/>
            <person name="Gara H."/>
            <person name="Roll P."/>
            <person name="Leveque C."/>
            <person name="Massacrier A."/>
            <person name="Ferracci G."/>
            <person name="Cillario J."/>
            <person name="Robaglia-Schlupp A."/>
            <person name="Vincentelli R."/>
            <person name="Cau P."/>
            <person name="Szepetowski P."/>
        </authorList>
    </citation>
    <scope>FUNCTION</scope>
    <scope>INTERACTION WITH ADAMTS4; CTSB AND PLAUR</scope>
    <scope>TISSUE SPECIFICITY</scope>
</reference>
<reference key="8">
    <citation type="journal article" date="2009" name="Int. J. Cancer">
        <title>SRPX2 is overexpressed in gastric cancer and promotes cellular migration and adhesion.</title>
        <authorList>
            <person name="Tanaka K."/>
            <person name="Arao T."/>
            <person name="Maegawa M."/>
            <person name="Matsumoto K."/>
            <person name="Kaneda H."/>
            <person name="Kudo K."/>
            <person name="Fujita Y."/>
            <person name="Yokote H."/>
            <person name="Yanagihara K."/>
            <person name="Yamada Y."/>
            <person name="Okamoto I."/>
            <person name="Nakagawa K."/>
            <person name="Nishio K."/>
        </authorList>
    </citation>
    <scope>FUNCTION</scope>
    <scope>SUBCELLULAR LOCATION</scope>
    <scope>TISSUE SPECIFICITY</scope>
</reference>
<reference key="9">
    <citation type="journal article" date="2012" name="PLoS ONE">
        <title>SRPX2 is a novel chondroitin sulfate proteoglycan that is overexpressed in gastrointestinal cancer.</title>
        <authorList>
            <person name="Tanaka K."/>
            <person name="Arao T."/>
            <person name="Tamura D."/>
            <person name="Aomatsu K."/>
            <person name="Furuta K."/>
            <person name="Matsumoto K."/>
            <person name="Kaneda H."/>
            <person name="Kudo K."/>
            <person name="Fujita Y."/>
            <person name="Kimura H."/>
            <person name="Yanagihara K."/>
            <person name="Yamada Y."/>
            <person name="Okamoto I."/>
            <person name="Nakagawa K."/>
            <person name="Nishio K."/>
        </authorList>
    </citation>
    <scope>INTERACTION WITH HGF</scope>
    <scope>SUBCELLULAR LOCATION</scope>
    <scope>TISSUE SPECIFICITY</scope>
    <scope>GLYCOSYLATION</scope>
</reference>
<reference key="10">
    <citation type="journal article" date="2013" name="Science">
        <title>The human language-associated gene SRPX2 regulates synapse formation and vocalization in mice.</title>
        <authorList>
            <person name="Sia G.M."/>
            <person name="Clem R.L."/>
            <person name="Huganir R.L."/>
        </authorList>
    </citation>
    <scope>FUNCTION</scope>
    <scope>SUBUNIT</scope>
    <scope>SUBCELLULAR LOCATION</scope>
</reference>
<sequence length="465" mass="52972">MASQLTQRGALFLLFFLTPAVTPTWYAGSGYYPDESYNEVYAEEVPQAPALDYRVPRWCYTLNIQDGEATCYSPKGGNYHSSLGTRCELSCDRGFRLIGRRSVQCLPSRRWSGTAYCRQMRCHALPFITSGTYTCTNGVLLDSRCDYSCSSGYHLEGDRSRICMEDGRWSGGEPVCVDIDPPKIRCPHSREKMAEPEKLTARVYWDPPLVKDSADGTITRVTLRGPEPGSHFPEGEHVIRYTAYDRAYNRASCKFIVKVQVRRCPTLKPPQHGYLTCTSAGDNYGATCEYHCDGGYDRQGTPSRVCQSSRQWSGSPPICAPMKINVNVNSAAGLLDQFYEKQRLLIISAPDPSNRYYKMQISMLQQSTCGLDLRHVTIIELVGQPPQEVGRIREQQLSANIIEELRQFQRLTRSYFNMVLIDKQGIDRDRYMEPVTPEEIFTFIDDYLLSNQELTQRREQRDICE</sequence>
<accession>O60687</accession>
<accession>B3KQT3</accession>
<accession>Q8WW85</accession>
<evidence type="ECO:0000250" key="1"/>
<evidence type="ECO:0000255" key="2"/>
<evidence type="ECO:0000255" key="3">
    <source>
        <dbReference type="PROSITE-ProRule" id="PRU00113"/>
    </source>
</evidence>
<evidence type="ECO:0000255" key="4">
    <source>
        <dbReference type="PROSITE-ProRule" id="PRU00302"/>
    </source>
</evidence>
<evidence type="ECO:0000269" key="5">
    <source>
    </source>
</evidence>
<evidence type="ECO:0000269" key="6">
    <source>
    </source>
</evidence>
<evidence type="ECO:0000269" key="7">
    <source>
    </source>
</evidence>
<evidence type="ECO:0000269" key="8">
    <source>
    </source>
</evidence>
<evidence type="ECO:0000269" key="9">
    <source>
    </source>
</evidence>
<evidence type="ECO:0000269" key="10">
    <source>
    </source>
</evidence>
<evidence type="ECO:0000269" key="11">
    <source>
    </source>
</evidence>
<organism>
    <name type="scientific">Homo sapiens</name>
    <name type="common">Human</name>
    <dbReference type="NCBI Taxonomy" id="9606"/>
    <lineage>
        <taxon>Eukaryota</taxon>
        <taxon>Metazoa</taxon>
        <taxon>Chordata</taxon>
        <taxon>Craniata</taxon>
        <taxon>Vertebrata</taxon>
        <taxon>Euteleostomi</taxon>
        <taxon>Mammalia</taxon>
        <taxon>Eutheria</taxon>
        <taxon>Euarchontoglires</taxon>
        <taxon>Primates</taxon>
        <taxon>Haplorrhini</taxon>
        <taxon>Catarrhini</taxon>
        <taxon>Hominidae</taxon>
        <taxon>Homo</taxon>
    </lineage>
</organism>
<gene>
    <name type="primary">SRPX2</name>
    <name type="synonym">SRPUL</name>
</gene>
<comment type="function">
    <text evidence="6 7 8 10">Acts as a ligand for the urokinase plasminogen activator surface receptor. Plays a role in angiogenesis by inducing endothelial cell migration and the formation of vascular network (cords). Involved in cellular migration and adhesion. Increases the phosphorylation levels of FAK. Interacts with and increases the mitogenic activity of HGF. Promotes synapse formation. May have a role in the perisylvian region, critical for language and cognitive development.</text>
</comment>
<comment type="subunit">
    <text evidence="1 7 9 10">Forms homooligomers (By similarity). Interacts with PLAUR (via the UPAR/Ly6 domains), ADAMTS4 and CTSB. Interacts with HGF; the interaction increases the mitogenic activity of HGF.</text>
</comment>
<comment type="subcellular location">
    <subcellularLocation>
        <location evidence="9">Secreted</location>
    </subcellularLocation>
    <subcellularLocation>
        <location>Cytoplasm</location>
    </subcellularLocation>
    <subcellularLocation>
        <location>Cell surface</location>
    </subcellularLocation>
    <subcellularLocation>
        <location evidence="1">Synapse</location>
    </subcellularLocation>
</comment>
<comment type="tissue specificity">
    <text evidence="6 7 8 9 11">Expressed in neurons of the rolandic area of the brain (at protein level). Highly expressed in the brain, placenta, lung, trachea, uterus, adrenal gland, heart, ovary and placenta. Weakly expressed in the peripheral blood, brain and bone marrow. Expressed in numerous cancer cell lines and in gastrointestinal cancer cells. Higher levels found in colorectal cancers than in normal colonic mucosa.</text>
</comment>
<comment type="PTM">
    <text evidence="9">Contains chondroitin sulfate chains.</text>
</comment>
<comment type="disease" evidence="6">
    <disease id="DI-02456">
        <name>Rolandic epilepsy, impaired intellectual development, and speech dyspraxia, X-linked</name>
        <acronym>RESDX</acronym>
        <description>A condition characterized by the association of rolandic seizures with oral and speech dyspraxia, and intellectual disability. Rolandic seizures occur during a period of significant brain maturation. During this time, dysfunction of neural network activities such as focal discharges may be associated with specific developmental disabilities resulting in specific cognitive impairments of language, visuo-spatial abilities or attention.</description>
        <dbReference type="MIM" id="300643"/>
    </disease>
    <text>The disease may be caused by variants affecting the gene represented in this entry.</text>
</comment>
<keyword id="KW-0037">Angiogenesis</keyword>
<keyword id="KW-0130">Cell adhesion</keyword>
<keyword id="KW-0963">Cytoplasm</keyword>
<keyword id="KW-0225">Disease variant</keyword>
<keyword id="KW-1015">Disulfide bond</keyword>
<keyword id="KW-0887">Epilepsy</keyword>
<keyword id="KW-0325">Glycoprotein</keyword>
<keyword id="KW-0991">Intellectual disability</keyword>
<keyword id="KW-0654">Proteoglycan</keyword>
<keyword id="KW-1267">Proteomics identification</keyword>
<keyword id="KW-1185">Reference proteome</keyword>
<keyword id="KW-0677">Repeat</keyword>
<keyword id="KW-0964">Secreted</keyword>
<keyword id="KW-0732">Signal</keyword>
<keyword id="KW-0768">Sushi</keyword>
<keyword id="KW-0770">Synapse</keyword>